<gene>
    <name type="primary">Ndufaf6</name>
</gene>
<comment type="function">
    <text evidence="2">Involved in the assembly of mitochondrial NADH:ubiquinone oxidoreductase complex (complex I) at early stages. May play a role in the biogenesis of complex I subunit MT-ND1.</text>
</comment>
<comment type="subcellular location">
    <subcellularLocation>
        <location evidence="4">Mitochondrion inner membrane</location>
    </subcellularLocation>
    <text evidence="1">Peripherally localized on the matrix face of the mitochondrial inner membrane.</text>
</comment>
<comment type="similarity">
    <text evidence="5">Belongs to the NDUFAF6 family.</text>
</comment>
<feature type="transit peptide" description="Mitochondrion" evidence="3">
    <location>
        <begin position="1"/>
        <end position="44"/>
    </location>
</feature>
<feature type="chain" id="PRO_0000291773" description="NADH dehydrogenase (ubiquinone) complex I, assembly factor 6">
    <location>
        <begin position="45"/>
        <end position="333"/>
    </location>
</feature>
<evidence type="ECO:0000250" key="1"/>
<evidence type="ECO:0000250" key="2">
    <source>
        <dbReference type="UniProtKB" id="Q330K2"/>
    </source>
</evidence>
<evidence type="ECO:0000255" key="3"/>
<evidence type="ECO:0000269" key="4">
    <source>
    </source>
</evidence>
<evidence type="ECO:0000305" key="5"/>
<reference key="1">
    <citation type="journal article" date="2009" name="PLoS Biol.">
        <title>Lineage-specific biology revealed by a finished genome assembly of the mouse.</title>
        <authorList>
            <person name="Church D.M."/>
            <person name="Goodstadt L."/>
            <person name="Hillier L.W."/>
            <person name="Zody M.C."/>
            <person name="Goldstein S."/>
            <person name="She X."/>
            <person name="Bult C.J."/>
            <person name="Agarwala R."/>
            <person name="Cherry J.L."/>
            <person name="DiCuccio M."/>
            <person name="Hlavina W."/>
            <person name="Kapustin Y."/>
            <person name="Meric P."/>
            <person name="Maglott D."/>
            <person name="Birtle Z."/>
            <person name="Marques A.C."/>
            <person name="Graves T."/>
            <person name="Zhou S."/>
            <person name="Teague B."/>
            <person name="Potamousis K."/>
            <person name="Churas C."/>
            <person name="Place M."/>
            <person name="Herschleb J."/>
            <person name="Runnheim R."/>
            <person name="Forrest D."/>
            <person name="Amos-Landgraf J."/>
            <person name="Schwartz D.C."/>
            <person name="Cheng Z."/>
            <person name="Lindblad-Toh K."/>
            <person name="Eichler E.E."/>
            <person name="Ponting C.P."/>
        </authorList>
    </citation>
    <scope>NUCLEOTIDE SEQUENCE [LARGE SCALE GENOMIC DNA]</scope>
    <source>
        <strain>C57BL/6J</strain>
    </source>
</reference>
<reference key="2">
    <citation type="journal article" date="2008" name="Cell">
        <title>A mitochondrial protein compendium elucidates complex I disease biology.</title>
        <authorList>
            <person name="Pagliarini D.J."/>
            <person name="Calvo S.E."/>
            <person name="Chang B."/>
            <person name="Sheth S.A."/>
            <person name="Vafai S.B."/>
            <person name="Ong S.E."/>
            <person name="Walford G.A."/>
            <person name="Sugiana C."/>
            <person name="Boneh A."/>
            <person name="Chen W.K."/>
            <person name="Hill D.E."/>
            <person name="Vidal M."/>
            <person name="Evans J.G."/>
            <person name="Thorburn D.R."/>
            <person name="Carr S.A."/>
            <person name="Mootha V.K."/>
        </authorList>
    </citation>
    <scope>SUBCELLULAR LOCATION [LARGE SCALE ANALYSIS]</scope>
</reference>
<reference key="3">
    <citation type="journal article" date="2010" name="Cell">
        <title>A tissue-specific atlas of mouse protein phosphorylation and expression.</title>
        <authorList>
            <person name="Huttlin E.L."/>
            <person name="Jedrychowski M.P."/>
            <person name="Elias J.E."/>
            <person name="Goswami T."/>
            <person name="Rad R."/>
            <person name="Beausoleil S.A."/>
            <person name="Villen J."/>
            <person name="Haas W."/>
            <person name="Sowa M.E."/>
            <person name="Gygi S.P."/>
        </authorList>
    </citation>
    <scope>IDENTIFICATION BY MASS SPECTROMETRY [LARGE SCALE ANALYSIS]</scope>
    <source>
        <tissue>Brain</tissue>
        <tissue>Brown adipose tissue</tissue>
        <tissue>Testis</tissue>
    </source>
</reference>
<keyword id="KW-0472">Membrane</keyword>
<keyword id="KW-0496">Mitochondrion</keyword>
<keyword id="KW-0999">Mitochondrion inner membrane</keyword>
<keyword id="KW-1185">Reference proteome</keyword>
<keyword id="KW-0809">Transit peptide</keyword>
<accession>A2AIL4</accession>
<organism>
    <name type="scientific">Mus musculus</name>
    <name type="common">Mouse</name>
    <dbReference type="NCBI Taxonomy" id="10090"/>
    <lineage>
        <taxon>Eukaryota</taxon>
        <taxon>Metazoa</taxon>
        <taxon>Chordata</taxon>
        <taxon>Craniata</taxon>
        <taxon>Vertebrata</taxon>
        <taxon>Euteleostomi</taxon>
        <taxon>Mammalia</taxon>
        <taxon>Eutheria</taxon>
        <taxon>Euarchontoglires</taxon>
        <taxon>Glires</taxon>
        <taxon>Rodentia</taxon>
        <taxon>Myomorpha</taxon>
        <taxon>Muroidea</taxon>
        <taxon>Muridae</taxon>
        <taxon>Murinae</taxon>
        <taxon>Mus</taxon>
        <taxon>Mus</taxon>
    </lineage>
</organism>
<proteinExistence type="evidence at protein level"/>
<sequence>MATSMLGSVRGPRPFGLANLFHRQPPRDAWERVRRLPGPSAVRRSVAAASGPGIPGSHLYCLELLRKRDYESYLCSLLFPAECQRSASALRAFNVELAQVKDSVSEKTIGLMRMQFWKKAVEDMYCDNPPHQPVAIELWKAVKKHNLTKRWLMRIIDEREKNLDDKAYRSMQELENYAENTQGSLLYLTLEVLGVKDLHADHAASHIGKAQGIVTCLRATPYHSSRRQVFLPMDVCVQHGVSQEDFLRRNQDKNVRDVVYDIASQAHLHLKHARSFHRSVPAEAFPAFLQTVSLEDYLKKIQRVDFDIFHPSLQQKNMLLPLSLYIQSWRKRY</sequence>
<dbReference type="EMBL" id="AL732497">
    <property type="status" value="NOT_ANNOTATED_CDS"/>
    <property type="molecule type" value="Genomic_DNA"/>
</dbReference>
<dbReference type="CCDS" id="CCDS38691.1"/>
<dbReference type="RefSeq" id="NP_001078962.1">
    <property type="nucleotide sequence ID" value="NM_001085493.2"/>
</dbReference>
<dbReference type="SMR" id="A2AIL4"/>
<dbReference type="BioGRID" id="218420">
    <property type="interactions" value="4"/>
</dbReference>
<dbReference type="FunCoup" id="A2AIL4">
    <property type="interactions" value="4067"/>
</dbReference>
<dbReference type="STRING" id="10090.ENSMUSP00000062039"/>
<dbReference type="GlyGen" id="A2AIL4">
    <property type="glycosylation" value="1 site, 1 O-linked glycan (1 site)"/>
</dbReference>
<dbReference type="iPTMnet" id="A2AIL4"/>
<dbReference type="PhosphoSitePlus" id="A2AIL4"/>
<dbReference type="jPOST" id="A2AIL4"/>
<dbReference type="PaxDb" id="10090-ENSMUSP00000062039"/>
<dbReference type="PeptideAtlas" id="A2AIL4"/>
<dbReference type="ProteomicsDB" id="252944"/>
<dbReference type="Pumba" id="A2AIL4"/>
<dbReference type="Antibodypedia" id="63909">
    <property type="antibodies" value="14 antibodies from 6 providers"/>
</dbReference>
<dbReference type="DNASU" id="76947"/>
<dbReference type="Ensembl" id="ENSMUST00000058183.9">
    <property type="protein sequence ID" value="ENSMUSP00000062039.9"/>
    <property type="gene ID" value="ENSMUSG00000050323.15"/>
</dbReference>
<dbReference type="GeneID" id="76947"/>
<dbReference type="KEGG" id="mmu:76947"/>
<dbReference type="UCSC" id="uc008ryx.3">
    <property type="organism name" value="mouse"/>
</dbReference>
<dbReference type="AGR" id="MGI:1924197"/>
<dbReference type="CTD" id="137682"/>
<dbReference type="MGI" id="MGI:1924197">
    <property type="gene designation" value="Ndufaf6"/>
</dbReference>
<dbReference type="VEuPathDB" id="HostDB:ENSMUSG00000050323"/>
<dbReference type="eggNOG" id="KOG4411">
    <property type="taxonomic scope" value="Eukaryota"/>
</dbReference>
<dbReference type="GeneTree" id="ENSGT00510000048688"/>
<dbReference type="HOGENOM" id="CLU_037269_6_0_1"/>
<dbReference type="InParanoid" id="A2AIL4"/>
<dbReference type="OMA" id="MINAREQ"/>
<dbReference type="OrthoDB" id="270318at2759"/>
<dbReference type="PhylomeDB" id="A2AIL4"/>
<dbReference type="TreeFam" id="TF300084"/>
<dbReference type="Reactome" id="R-MMU-6799198">
    <property type="pathway name" value="Complex I biogenesis"/>
</dbReference>
<dbReference type="BioGRID-ORCS" id="76947">
    <property type="hits" value="14 hits in 78 CRISPR screens"/>
</dbReference>
<dbReference type="PRO" id="PR:A2AIL4"/>
<dbReference type="Proteomes" id="UP000000589">
    <property type="component" value="Chromosome 4"/>
</dbReference>
<dbReference type="RNAct" id="A2AIL4">
    <property type="molecule type" value="protein"/>
</dbReference>
<dbReference type="Bgee" id="ENSMUSG00000050323">
    <property type="expression patterns" value="Expressed in extra-ocular muscle and 184 other cell types or tissues"/>
</dbReference>
<dbReference type="GO" id="GO:0005743">
    <property type="term" value="C:mitochondrial inner membrane"/>
    <property type="evidence" value="ECO:0007669"/>
    <property type="project" value="UniProtKB-SubCell"/>
</dbReference>
<dbReference type="GO" id="GO:0005739">
    <property type="term" value="C:mitochondrion"/>
    <property type="evidence" value="ECO:0007005"/>
    <property type="project" value="MGI"/>
</dbReference>
<dbReference type="GO" id="GO:0009058">
    <property type="term" value="P:biosynthetic process"/>
    <property type="evidence" value="ECO:0007669"/>
    <property type="project" value="InterPro"/>
</dbReference>
<dbReference type="GO" id="GO:0032981">
    <property type="term" value="P:mitochondrial respiratory chain complex I assembly"/>
    <property type="evidence" value="ECO:0007669"/>
    <property type="project" value="Ensembl"/>
</dbReference>
<dbReference type="FunFam" id="1.10.600.10:FF:000013">
    <property type="entry name" value="NADH dehydrogenase (ubiquinone) complex I, assembly factor 6"/>
    <property type="match status" value="1"/>
</dbReference>
<dbReference type="Gene3D" id="1.10.600.10">
    <property type="entry name" value="Farnesyl Diphosphate Synthase"/>
    <property type="match status" value="1"/>
</dbReference>
<dbReference type="InterPro" id="IPR008949">
    <property type="entry name" value="Isoprenoid_synthase_dom_sf"/>
</dbReference>
<dbReference type="InterPro" id="IPR002060">
    <property type="entry name" value="Squ/phyt_synthse"/>
</dbReference>
<dbReference type="PANTHER" id="PTHR21181">
    <property type="match status" value="1"/>
</dbReference>
<dbReference type="PANTHER" id="PTHR21181:SF13">
    <property type="entry name" value="NADH DEHYDROGENASE (UBIQUINONE) COMPLEX I, ASSEMBLY FACTOR 6"/>
    <property type="match status" value="1"/>
</dbReference>
<dbReference type="Pfam" id="PF00494">
    <property type="entry name" value="SQS_PSY"/>
    <property type="match status" value="1"/>
</dbReference>
<dbReference type="SUPFAM" id="SSF48576">
    <property type="entry name" value="Terpenoid synthases"/>
    <property type="match status" value="1"/>
</dbReference>
<protein>
    <recommendedName>
        <fullName>NADH dehydrogenase (ubiquinone) complex I, assembly factor 6</fullName>
    </recommendedName>
</protein>
<name>NDUF6_MOUSE</name>